<reference key="1">
    <citation type="journal article" date="2005" name="Nature">
        <title>The genome sequence of the rice blast fungus Magnaporthe grisea.</title>
        <authorList>
            <person name="Dean R.A."/>
            <person name="Talbot N.J."/>
            <person name="Ebbole D.J."/>
            <person name="Farman M.L."/>
            <person name="Mitchell T.K."/>
            <person name="Orbach M.J."/>
            <person name="Thon M.R."/>
            <person name="Kulkarni R."/>
            <person name="Xu J.-R."/>
            <person name="Pan H."/>
            <person name="Read N.D."/>
            <person name="Lee Y.-H."/>
            <person name="Carbone I."/>
            <person name="Brown D."/>
            <person name="Oh Y.Y."/>
            <person name="Donofrio N."/>
            <person name="Jeong J.S."/>
            <person name="Soanes D.M."/>
            <person name="Djonovic S."/>
            <person name="Kolomiets E."/>
            <person name="Rehmeyer C."/>
            <person name="Li W."/>
            <person name="Harding M."/>
            <person name="Kim S."/>
            <person name="Lebrun M.-H."/>
            <person name="Bohnert H."/>
            <person name="Coughlan S."/>
            <person name="Butler J."/>
            <person name="Calvo S.E."/>
            <person name="Ma L.-J."/>
            <person name="Nicol R."/>
            <person name="Purcell S."/>
            <person name="Nusbaum C."/>
            <person name="Galagan J.E."/>
            <person name="Birren B.W."/>
        </authorList>
    </citation>
    <scope>NUCLEOTIDE SEQUENCE [LARGE SCALE GENOMIC DNA]</scope>
    <source>
        <strain>70-15 / ATCC MYA-4617 / FGSC 8958</strain>
    </source>
</reference>
<keyword id="KW-0119">Carbohydrate metabolism</keyword>
<keyword id="KW-0325">Glycoprotein</keyword>
<keyword id="KW-0326">Glycosidase</keyword>
<keyword id="KW-0378">Hydrolase</keyword>
<keyword id="KW-0624">Polysaccharide degradation</keyword>
<keyword id="KW-1185">Reference proteome</keyword>
<keyword id="KW-0964">Secreted</keyword>
<keyword id="KW-0732">Signal</keyword>
<keyword id="KW-0858">Xylan degradation</keyword>
<evidence type="ECO:0000250" key="1"/>
<evidence type="ECO:0000255" key="2"/>
<evidence type="ECO:0000255" key="3">
    <source>
        <dbReference type="PROSITE-ProRule" id="PRU01097"/>
    </source>
</evidence>
<evidence type="ECO:0000255" key="4">
    <source>
        <dbReference type="PROSITE-ProRule" id="PRU10062"/>
    </source>
</evidence>
<evidence type="ECO:0000305" key="5"/>
<accession>G4MWS3</accession>
<protein>
    <recommendedName>
        <fullName>Endo-1,4-beta-xylanase 3</fullName>
        <shortName>Xylanase 3</shortName>
        <ecNumber>3.2.1.8</ecNumber>
    </recommendedName>
    <alternativeName>
        <fullName>1,4-beta-D-xylan xylanohydrolase 3</fullName>
    </alternativeName>
</protein>
<gene>
    <name type="primary">XYL3</name>
    <name type="ORF">MGG_08331</name>
</gene>
<feature type="signal peptide" evidence="2">
    <location>
        <begin position="1"/>
        <end position="19"/>
    </location>
</feature>
<feature type="chain" id="PRO_0000429621" description="Endo-1,4-beta-xylanase 3">
    <location>
        <begin position="20"/>
        <end position="236"/>
    </location>
</feature>
<feature type="domain" description="GH11" evidence="3">
    <location>
        <begin position="45"/>
        <end position="236"/>
    </location>
</feature>
<feature type="active site" description="Nucleophile" evidence="4">
    <location>
        <position position="131"/>
    </location>
</feature>
<feature type="active site" description="Proton donor" evidence="1">
    <location>
        <position position="223"/>
    </location>
</feature>
<feature type="glycosylation site" description="N-linked (GlcNAc...) asparagine" evidence="2">
    <location>
        <position position="39"/>
    </location>
</feature>
<feature type="glycosylation site" description="N-linked (GlcNAc...) asparagine" evidence="2">
    <location>
        <position position="106"/>
    </location>
</feature>
<dbReference type="EC" id="3.2.1.8"/>
<dbReference type="EMBL" id="CM001232">
    <property type="protein sequence ID" value="EHA55927.1"/>
    <property type="molecule type" value="Genomic_DNA"/>
</dbReference>
<dbReference type="RefSeq" id="XP_003715734.1">
    <property type="nucleotide sequence ID" value="XM_003715686.1"/>
</dbReference>
<dbReference type="SMR" id="G4MWS3"/>
<dbReference type="STRING" id="242507.G4MWS3"/>
<dbReference type="CAZy" id="GH11">
    <property type="family name" value="Glycoside Hydrolase Family 11"/>
</dbReference>
<dbReference type="GlyCosmos" id="G4MWS3">
    <property type="glycosylation" value="2 sites, No reported glycans"/>
</dbReference>
<dbReference type="EnsemblFungi" id="MGG_08331T0">
    <property type="protein sequence ID" value="MGG_08331T0"/>
    <property type="gene ID" value="MGG_08331"/>
</dbReference>
<dbReference type="GeneID" id="2678467"/>
<dbReference type="KEGG" id="mgr:MGG_08331"/>
<dbReference type="VEuPathDB" id="FungiDB:MGG_08331"/>
<dbReference type="eggNOG" id="ENOG502RXA7">
    <property type="taxonomic scope" value="Eukaryota"/>
</dbReference>
<dbReference type="HOGENOM" id="CLU_052631_0_0_1"/>
<dbReference type="InParanoid" id="G4MWS3"/>
<dbReference type="OMA" id="ISLYGWT"/>
<dbReference type="OrthoDB" id="2115822at2759"/>
<dbReference type="UniPathway" id="UPA00114"/>
<dbReference type="PHI-base" id="PHI:2211"/>
<dbReference type="Proteomes" id="UP000009058">
    <property type="component" value="Chromosome 2"/>
</dbReference>
<dbReference type="GO" id="GO:0005576">
    <property type="term" value="C:extracellular region"/>
    <property type="evidence" value="ECO:0007669"/>
    <property type="project" value="UniProtKB-SubCell"/>
</dbReference>
<dbReference type="GO" id="GO:0031176">
    <property type="term" value="F:endo-1,4-beta-xylanase activity"/>
    <property type="evidence" value="ECO:0007669"/>
    <property type="project" value="UniProtKB-EC"/>
</dbReference>
<dbReference type="GO" id="GO:0045493">
    <property type="term" value="P:xylan catabolic process"/>
    <property type="evidence" value="ECO:0007669"/>
    <property type="project" value="UniProtKB-UniPathway"/>
</dbReference>
<dbReference type="FunFam" id="2.60.120.180:FF:000001">
    <property type="entry name" value="Endo-1,4-beta-xylanase"/>
    <property type="match status" value="1"/>
</dbReference>
<dbReference type="Gene3D" id="2.60.120.180">
    <property type="match status" value="1"/>
</dbReference>
<dbReference type="InterPro" id="IPR013320">
    <property type="entry name" value="ConA-like_dom_sf"/>
</dbReference>
<dbReference type="InterPro" id="IPR013319">
    <property type="entry name" value="GH11/12"/>
</dbReference>
<dbReference type="InterPro" id="IPR018208">
    <property type="entry name" value="GH11_AS_1"/>
</dbReference>
<dbReference type="InterPro" id="IPR033123">
    <property type="entry name" value="GH11_dom"/>
</dbReference>
<dbReference type="InterPro" id="IPR001137">
    <property type="entry name" value="Glyco_hydro_11"/>
</dbReference>
<dbReference type="PANTHER" id="PTHR46828">
    <property type="entry name" value="ENDO-1,4-BETA-XYLANASE A-RELATED"/>
    <property type="match status" value="1"/>
</dbReference>
<dbReference type="PANTHER" id="PTHR46828:SF2">
    <property type="entry name" value="ENDO-1,4-BETA-XYLANASE A-RELATED"/>
    <property type="match status" value="1"/>
</dbReference>
<dbReference type="Pfam" id="PF00457">
    <property type="entry name" value="Glyco_hydro_11"/>
    <property type="match status" value="1"/>
</dbReference>
<dbReference type="PRINTS" id="PR00911">
    <property type="entry name" value="GLHYDRLASE11"/>
</dbReference>
<dbReference type="SUPFAM" id="SSF49899">
    <property type="entry name" value="Concanavalin A-like lectins/glucanases"/>
    <property type="match status" value="1"/>
</dbReference>
<dbReference type="PROSITE" id="PS00776">
    <property type="entry name" value="GH11_1"/>
    <property type="match status" value="1"/>
</dbReference>
<dbReference type="PROSITE" id="PS51761">
    <property type="entry name" value="GH11_3"/>
    <property type="match status" value="1"/>
</dbReference>
<name>XYN3_PYRO7</name>
<comment type="function">
    <text evidence="1">Endo-1,4-beta-xylanase involved in the hydrolysis of xylan, a major structural heterogeneous polysaccharide found in plant biomass representing the second most abundant polysaccharide in the biosphere, after cellulose.</text>
</comment>
<comment type="catalytic activity">
    <reaction>
        <text>Endohydrolysis of (1-&gt;4)-beta-D-xylosidic linkages in xylans.</text>
        <dbReference type="EC" id="3.2.1.8"/>
    </reaction>
</comment>
<comment type="pathway">
    <text>Glycan degradation; xylan degradation.</text>
</comment>
<comment type="subcellular location">
    <subcellularLocation>
        <location evidence="1">Secreted</location>
    </subcellularLocation>
</comment>
<comment type="similarity">
    <text evidence="5">Belongs to the glycosyl hydrolase 11 (cellulase G) family.</text>
</comment>
<sequence>MQILTWALAALAAIPAVTAAPVETVEASSMDELVERSPNVTLVARGTPSSTGTHNGFYYSHWTDNAGADVTYSMGGGGQFSYTWRNSGNFVGGKGWNPGNAGRVINYSGSYSPQGNSYLAVYGWTRNPLIEYYVVESFGSYNPSSGATNRGSFTSDGSTYDILVSTRYNQPSIDGTKTFQQFWSVRRNKRASGTVTFANHVNAWRNAGLNLGNQWNYQILAVEGYHSSGSASMTVR</sequence>
<proteinExistence type="inferred from homology"/>
<organism>
    <name type="scientific">Pyricularia oryzae (strain 70-15 / ATCC MYA-4617 / FGSC 8958)</name>
    <name type="common">Rice blast fungus</name>
    <name type="synonym">Magnaporthe oryzae</name>
    <dbReference type="NCBI Taxonomy" id="242507"/>
    <lineage>
        <taxon>Eukaryota</taxon>
        <taxon>Fungi</taxon>
        <taxon>Dikarya</taxon>
        <taxon>Ascomycota</taxon>
        <taxon>Pezizomycotina</taxon>
        <taxon>Sordariomycetes</taxon>
        <taxon>Sordariomycetidae</taxon>
        <taxon>Magnaporthales</taxon>
        <taxon>Pyriculariaceae</taxon>
        <taxon>Pyricularia</taxon>
    </lineage>
</organism>